<proteinExistence type="evidence at protein level"/>
<reference key="1">
    <citation type="journal article" date="2005" name="Mol. Genet. Genomics">
        <title>A fine physical map of the rice chromosome 5.</title>
        <authorList>
            <person name="Cheng C.-H."/>
            <person name="Chung M.C."/>
            <person name="Liu S.-M."/>
            <person name="Chen S.-K."/>
            <person name="Kao F.Y."/>
            <person name="Lin S.-J."/>
            <person name="Hsiao S.-H."/>
            <person name="Tseng I.C."/>
            <person name="Hsing Y.-I.C."/>
            <person name="Wu H.-P."/>
            <person name="Chen C.-S."/>
            <person name="Shaw J.-F."/>
            <person name="Wu J."/>
            <person name="Matsumoto T."/>
            <person name="Sasaki T."/>
            <person name="Chen H.-C."/>
            <person name="Chow T.-Y."/>
        </authorList>
    </citation>
    <scope>NUCLEOTIDE SEQUENCE [LARGE SCALE GENOMIC DNA]</scope>
    <source>
        <strain>cv. Nipponbare</strain>
    </source>
</reference>
<reference key="2">
    <citation type="journal article" date="2005" name="Nature">
        <title>The map-based sequence of the rice genome.</title>
        <authorList>
            <consortium name="International rice genome sequencing project (IRGSP)"/>
        </authorList>
    </citation>
    <scope>NUCLEOTIDE SEQUENCE [LARGE SCALE GENOMIC DNA]</scope>
    <source>
        <strain>cv. Nipponbare</strain>
    </source>
</reference>
<reference key="3">
    <citation type="journal article" date="2008" name="Nucleic Acids Res.">
        <title>The rice annotation project database (RAP-DB): 2008 update.</title>
        <authorList>
            <consortium name="The rice annotation project (RAP)"/>
        </authorList>
    </citation>
    <scope>GENOME REANNOTATION</scope>
    <source>
        <strain>cv. Nipponbare</strain>
    </source>
</reference>
<reference key="4">
    <citation type="journal article" date="2013" name="Rice">
        <title>Improvement of the Oryza sativa Nipponbare reference genome using next generation sequence and optical map data.</title>
        <authorList>
            <person name="Kawahara Y."/>
            <person name="de la Bastide M."/>
            <person name="Hamilton J.P."/>
            <person name="Kanamori H."/>
            <person name="McCombie W.R."/>
            <person name="Ouyang S."/>
            <person name="Schwartz D.C."/>
            <person name="Tanaka T."/>
            <person name="Wu J."/>
            <person name="Zhou S."/>
            <person name="Childs K.L."/>
            <person name="Davidson R.M."/>
            <person name="Lin H."/>
            <person name="Quesada-Ocampo L."/>
            <person name="Vaillancourt B."/>
            <person name="Sakai H."/>
            <person name="Lee S.S."/>
            <person name="Kim J."/>
            <person name="Numa H."/>
            <person name="Itoh T."/>
            <person name="Buell C.R."/>
            <person name="Matsumoto T."/>
        </authorList>
    </citation>
    <scope>GENOME REANNOTATION</scope>
    <source>
        <strain>cv. Nipponbare</strain>
    </source>
</reference>
<reference key="5">
    <citation type="journal article" date="2005" name="PLoS Biol.">
        <title>The genomes of Oryza sativa: a history of duplications.</title>
        <authorList>
            <person name="Yu J."/>
            <person name="Wang J."/>
            <person name="Lin W."/>
            <person name="Li S."/>
            <person name="Li H."/>
            <person name="Zhou J."/>
            <person name="Ni P."/>
            <person name="Dong W."/>
            <person name="Hu S."/>
            <person name="Zeng C."/>
            <person name="Zhang J."/>
            <person name="Zhang Y."/>
            <person name="Li R."/>
            <person name="Xu Z."/>
            <person name="Li S."/>
            <person name="Li X."/>
            <person name="Zheng H."/>
            <person name="Cong L."/>
            <person name="Lin L."/>
            <person name="Yin J."/>
            <person name="Geng J."/>
            <person name="Li G."/>
            <person name="Shi J."/>
            <person name="Liu J."/>
            <person name="Lv H."/>
            <person name="Li J."/>
            <person name="Wang J."/>
            <person name="Deng Y."/>
            <person name="Ran L."/>
            <person name="Shi X."/>
            <person name="Wang X."/>
            <person name="Wu Q."/>
            <person name="Li C."/>
            <person name="Ren X."/>
            <person name="Wang J."/>
            <person name="Wang X."/>
            <person name="Li D."/>
            <person name="Liu D."/>
            <person name="Zhang X."/>
            <person name="Ji Z."/>
            <person name="Zhao W."/>
            <person name="Sun Y."/>
            <person name="Zhang Z."/>
            <person name="Bao J."/>
            <person name="Han Y."/>
            <person name="Dong L."/>
            <person name="Ji J."/>
            <person name="Chen P."/>
            <person name="Wu S."/>
            <person name="Liu J."/>
            <person name="Xiao Y."/>
            <person name="Bu D."/>
            <person name="Tan J."/>
            <person name="Yang L."/>
            <person name="Ye C."/>
            <person name="Zhang J."/>
            <person name="Xu J."/>
            <person name="Zhou Y."/>
            <person name="Yu Y."/>
            <person name="Zhang B."/>
            <person name="Zhuang S."/>
            <person name="Wei H."/>
            <person name="Liu B."/>
            <person name="Lei M."/>
            <person name="Yu H."/>
            <person name="Li Y."/>
            <person name="Xu H."/>
            <person name="Wei S."/>
            <person name="He X."/>
            <person name="Fang L."/>
            <person name="Zhang Z."/>
            <person name="Zhang Y."/>
            <person name="Huang X."/>
            <person name="Su Z."/>
            <person name="Tong W."/>
            <person name="Li J."/>
            <person name="Tong Z."/>
            <person name="Li S."/>
            <person name="Ye J."/>
            <person name="Wang L."/>
            <person name="Fang L."/>
            <person name="Lei T."/>
            <person name="Chen C.-S."/>
            <person name="Chen H.-C."/>
            <person name="Xu Z."/>
            <person name="Li H."/>
            <person name="Huang H."/>
            <person name="Zhang F."/>
            <person name="Xu H."/>
            <person name="Li N."/>
            <person name="Zhao C."/>
            <person name="Li S."/>
            <person name="Dong L."/>
            <person name="Huang Y."/>
            <person name="Li L."/>
            <person name="Xi Y."/>
            <person name="Qi Q."/>
            <person name="Li W."/>
            <person name="Zhang B."/>
            <person name="Hu W."/>
            <person name="Zhang Y."/>
            <person name="Tian X."/>
            <person name="Jiao Y."/>
            <person name="Liang X."/>
            <person name="Jin J."/>
            <person name="Gao L."/>
            <person name="Zheng W."/>
            <person name="Hao B."/>
            <person name="Liu S.-M."/>
            <person name="Wang W."/>
            <person name="Yuan L."/>
            <person name="Cao M."/>
            <person name="McDermott J."/>
            <person name="Samudrala R."/>
            <person name="Wang J."/>
            <person name="Wong G.K.-S."/>
            <person name="Yang H."/>
        </authorList>
    </citation>
    <scope>NUCLEOTIDE SEQUENCE [LARGE SCALE GENOMIC DNA]</scope>
    <source>
        <strain>cv. Nipponbare</strain>
    </source>
</reference>
<reference key="6">
    <citation type="submission" date="2006-10" db="EMBL/GenBank/DDBJ databases">
        <title>Oryza sativa full length cDNA.</title>
        <authorList>
            <consortium name="The rice full-length cDNA consortium"/>
        </authorList>
    </citation>
    <scope>NUCLEOTIDE SEQUENCE [LARGE SCALE MRNA]</scope>
    <source>
        <strain>cv. Nipponbare</strain>
    </source>
</reference>
<reference key="7">
    <citation type="journal article" date="2016" name="Physiol. Plantarum">
        <title>Molecular dissection of Oryza sativa salt-induced RING Finger Protein 1 (OsSIRP1): possible involvement in the sensitivity response to salinity stress.</title>
        <authorList>
            <person name="Hwang S.G."/>
            <person name="Kim J.J."/>
            <person name="Lim S.D."/>
            <person name="Park Y.C."/>
            <person name="Moon J.C."/>
            <person name="Jang C.S."/>
        </authorList>
    </citation>
    <scope>FUNCTION</scope>
    <scope>CATALYTIC ACTIVITY</scope>
    <scope>SUBCELLULAR LOCATION</scope>
    <scope>INDUCTION</scope>
    <scope>MUTAGENESIS OF CYS-225</scope>
</reference>
<protein>
    <recommendedName>
        <fullName evidence="6">E3 ubiquitin-protein ligase SIRP1</fullName>
        <ecNumber evidence="4">2.3.2.27</ecNumber>
    </recommendedName>
    <alternativeName>
        <fullName evidence="5">Salt-induced RING finger protein 1</fullName>
        <shortName evidence="5">OsSIRP1</shortName>
    </alternativeName>
</protein>
<evidence type="ECO:0000250" key="1"/>
<evidence type="ECO:0000255" key="2">
    <source>
        <dbReference type="PROSITE-ProRule" id="PRU00175"/>
    </source>
</evidence>
<evidence type="ECO:0000256" key="3">
    <source>
        <dbReference type="SAM" id="MobiDB-lite"/>
    </source>
</evidence>
<evidence type="ECO:0000269" key="4">
    <source>
    </source>
</evidence>
<evidence type="ECO:0000303" key="5">
    <source>
    </source>
</evidence>
<evidence type="ECO:0000305" key="6"/>
<evidence type="ECO:0000312" key="7">
    <source>
        <dbReference type="EMBL" id="AAT77283.1"/>
    </source>
</evidence>
<evidence type="ECO:0000312" key="8">
    <source>
        <dbReference type="EMBL" id="BAS94636.1"/>
    </source>
</evidence>
<evidence type="ECO:0000312" key="9">
    <source>
        <dbReference type="EMBL" id="EEE64176.1"/>
    </source>
</evidence>
<sequence length="323" mass="35562">MAEAAITRYWCHECEQAIEEAMVDEIKCPSCGGGFVEEMTDEEIERLTNRQPEPGFSQWNPIEHPGETMDSDDEDNDLGREFEGFIRRHRRASTLRRVLDSIHDDLADDQERDSSILINAFNQALALQGSVLDPDEGQGDQGGSTNDDGLLEEYVLGAGLSLLLQHLAESDPSRNGTPPAKKEAVEALPTVKIEEVVSCSVCLDDLEVGSQAKQMPCEHKFHSSCILPWLELHSSCPVCRFELPSEETKDLNEPSNIGRVEDSHEEVRADGPGNVSESSNRPWAIVPWLNELFSTREAQNAGGVSTDQQSPHTSGTNPNAGHS</sequence>
<keyword id="KW-0963">Cytoplasm</keyword>
<keyword id="KW-0479">Metal-binding</keyword>
<keyword id="KW-1185">Reference proteome</keyword>
<keyword id="KW-0346">Stress response</keyword>
<keyword id="KW-0808">Transferase</keyword>
<keyword id="KW-0833">Ubl conjugation pathway</keyword>
<keyword id="KW-0862">Zinc</keyword>
<keyword id="KW-0863">Zinc-finger</keyword>
<gene>
    <name evidence="5" type="primary">SIRP1</name>
    <name evidence="8" type="ordered locus">Os05g0488800</name>
    <name evidence="6" type="ordered locus">LOC_Os05g40980</name>
    <name evidence="7" type="ORF">OJ1119_H02.11</name>
    <name evidence="9" type="ORF">OsJ_19008</name>
</gene>
<accession>Q6AVN2</accession>
<accession>Q0DH72</accession>
<feature type="chain" id="PRO_0000440260" description="E3 ubiquitin-protein ligase SIRP1">
    <location>
        <begin position="1"/>
        <end position="323"/>
    </location>
</feature>
<feature type="zinc finger region" description="RING-type; atypical" evidence="2">
    <location>
        <begin position="199"/>
        <end position="240"/>
    </location>
</feature>
<feature type="region of interest" description="Disordered" evidence="3">
    <location>
        <begin position="248"/>
        <end position="280"/>
    </location>
</feature>
<feature type="region of interest" description="Disordered" evidence="3">
    <location>
        <begin position="296"/>
        <end position="323"/>
    </location>
</feature>
<feature type="compositionally biased region" description="Basic and acidic residues" evidence="3">
    <location>
        <begin position="259"/>
        <end position="269"/>
    </location>
</feature>
<feature type="mutagenesis site" description="Loss of catalytic activity." evidence="4">
    <original>C</original>
    <variation>A</variation>
    <location>
        <position position="225"/>
    </location>
</feature>
<organism>
    <name type="scientific">Oryza sativa subsp. japonica</name>
    <name type="common">Rice</name>
    <dbReference type="NCBI Taxonomy" id="39947"/>
    <lineage>
        <taxon>Eukaryota</taxon>
        <taxon>Viridiplantae</taxon>
        <taxon>Streptophyta</taxon>
        <taxon>Embryophyta</taxon>
        <taxon>Tracheophyta</taxon>
        <taxon>Spermatophyta</taxon>
        <taxon>Magnoliopsida</taxon>
        <taxon>Liliopsida</taxon>
        <taxon>Poales</taxon>
        <taxon>Poaceae</taxon>
        <taxon>BOP clade</taxon>
        <taxon>Oryzoideae</taxon>
        <taxon>Oryzeae</taxon>
        <taxon>Oryzinae</taxon>
        <taxon>Oryza</taxon>
        <taxon>Oryza sativa</taxon>
    </lineage>
</organism>
<dbReference type="EC" id="2.3.2.27" evidence="4"/>
<dbReference type="EMBL" id="AC097175">
    <property type="protein sequence ID" value="AAT77283.1"/>
    <property type="molecule type" value="Genomic_DNA"/>
</dbReference>
<dbReference type="EMBL" id="AP008211">
    <property type="protein sequence ID" value="BAF17801.2"/>
    <property type="status" value="ALT_SEQ"/>
    <property type="molecule type" value="Genomic_DNA"/>
</dbReference>
<dbReference type="EMBL" id="AP014961">
    <property type="protein sequence ID" value="BAS94636.1"/>
    <property type="molecule type" value="Genomic_DNA"/>
</dbReference>
<dbReference type="EMBL" id="CM000142">
    <property type="protein sequence ID" value="EEE64176.1"/>
    <property type="molecule type" value="Genomic_DNA"/>
</dbReference>
<dbReference type="EMBL" id="AK240640">
    <property type="protein sequence ID" value="BAH00840.1"/>
    <property type="molecule type" value="mRNA"/>
</dbReference>
<dbReference type="SMR" id="Q6AVN2"/>
<dbReference type="FunCoup" id="Q6AVN2">
    <property type="interactions" value="765"/>
</dbReference>
<dbReference type="STRING" id="39947.Q6AVN2"/>
<dbReference type="PaxDb" id="39947-Q6AVN2"/>
<dbReference type="EnsemblPlants" id="Os05t0488800-01">
    <property type="protein sequence ID" value="Os05t0488800-01"/>
    <property type="gene ID" value="Os05g0488800"/>
</dbReference>
<dbReference type="Gramene" id="Os05t0488800-01">
    <property type="protein sequence ID" value="Os05t0488800-01"/>
    <property type="gene ID" value="Os05g0488800"/>
</dbReference>
<dbReference type="KEGG" id="dosa:Os05g0488800"/>
<dbReference type="KEGG" id="osa:4339152"/>
<dbReference type="eggNOG" id="KOG0800">
    <property type="taxonomic scope" value="Eukaryota"/>
</dbReference>
<dbReference type="HOGENOM" id="CLU_034892_4_0_1"/>
<dbReference type="InParanoid" id="Q6AVN2"/>
<dbReference type="OMA" id="DNDPTRH"/>
<dbReference type="OrthoDB" id="21204at2759"/>
<dbReference type="UniPathway" id="UPA00143"/>
<dbReference type="Proteomes" id="UP000000763">
    <property type="component" value="Chromosome 5"/>
</dbReference>
<dbReference type="Proteomes" id="UP000007752">
    <property type="component" value="Chromosome 5"/>
</dbReference>
<dbReference type="Proteomes" id="UP000059680">
    <property type="component" value="Chromosome 5"/>
</dbReference>
<dbReference type="GO" id="GO:0005737">
    <property type="term" value="C:cytoplasm"/>
    <property type="evidence" value="ECO:0007669"/>
    <property type="project" value="UniProtKB-SubCell"/>
</dbReference>
<dbReference type="GO" id="GO:0061630">
    <property type="term" value="F:ubiquitin protein ligase activity"/>
    <property type="evidence" value="ECO:0000318"/>
    <property type="project" value="GO_Central"/>
</dbReference>
<dbReference type="GO" id="GO:0008270">
    <property type="term" value="F:zinc ion binding"/>
    <property type="evidence" value="ECO:0007669"/>
    <property type="project" value="UniProtKB-KW"/>
</dbReference>
<dbReference type="GO" id="GO:0016567">
    <property type="term" value="P:protein ubiquitination"/>
    <property type="evidence" value="ECO:0007669"/>
    <property type="project" value="UniProtKB-UniPathway"/>
</dbReference>
<dbReference type="GO" id="GO:0006511">
    <property type="term" value="P:ubiquitin-dependent protein catabolic process"/>
    <property type="evidence" value="ECO:0000318"/>
    <property type="project" value="GO_Central"/>
</dbReference>
<dbReference type="CDD" id="cd16669">
    <property type="entry name" value="RING-H2_RNF181"/>
    <property type="match status" value="1"/>
</dbReference>
<dbReference type="FunFam" id="3.30.40.10:FF:000022">
    <property type="entry name" value="E3 ubiquitin-protein ligase RING1-like"/>
    <property type="match status" value="1"/>
</dbReference>
<dbReference type="Gene3D" id="3.30.40.10">
    <property type="entry name" value="Zinc/RING finger domain, C3HC4 (zinc finger)"/>
    <property type="match status" value="1"/>
</dbReference>
<dbReference type="InterPro" id="IPR039525">
    <property type="entry name" value="RNF126-like_zinc-ribbon"/>
</dbReference>
<dbReference type="InterPro" id="IPR029040">
    <property type="entry name" value="RPABC4/Spt4"/>
</dbReference>
<dbReference type="InterPro" id="IPR001841">
    <property type="entry name" value="Znf_RING"/>
</dbReference>
<dbReference type="InterPro" id="IPR013083">
    <property type="entry name" value="Znf_RING/FYVE/PHD"/>
</dbReference>
<dbReference type="PANTHER" id="PTHR15710">
    <property type="entry name" value="E3 UBIQUITIN-PROTEIN LIGASE PRAJA"/>
    <property type="match status" value="1"/>
</dbReference>
<dbReference type="PANTHER" id="PTHR15710:SF22">
    <property type="entry name" value="RING-TYPE E3 UBIQUITIN TRANSFERASE"/>
    <property type="match status" value="1"/>
</dbReference>
<dbReference type="Pfam" id="PF13639">
    <property type="entry name" value="zf-RING_2"/>
    <property type="match status" value="1"/>
</dbReference>
<dbReference type="Pfam" id="PF14369">
    <property type="entry name" value="Zn_ribbon_19"/>
    <property type="match status" value="1"/>
</dbReference>
<dbReference type="SMART" id="SM00184">
    <property type="entry name" value="RING"/>
    <property type="match status" value="1"/>
</dbReference>
<dbReference type="SUPFAM" id="SSF57850">
    <property type="entry name" value="RING/U-box"/>
    <property type="match status" value="1"/>
</dbReference>
<dbReference type="SUPFAM" id="SSF63393">
    <property type="entry name" value="RNA polymerase subunits"/>
    <property type="match status" value="1"/>
</dbReference>
<dbReference type="PROSITE" id="PS50089">
    <property type="entry name" value="ZF_RING_2"/>
    <property type="match status" value="1"/>
</dbReference>
<name>SIRP1_ORYSJ</name>
<comment type="function">
    <text evidence="4">Possesses E3 ubiqutin-protein ligase activity in vitro. Acts as negative regulator of salinity stress tolerance mediated by the ubiquitin-proteasome degradation pathway.</text>
</comment>
<comment type="catalytic activity">
    <reaction evidence="4">
        <text>S-ubiquitinyl-[E2 ubiquitin-conjugating enzyme]-L-cysteine + [acceptor protein]-L-lysine = [E2 ubiquitin-conjugating enzyme]-L-cysteine + N(6)-ubiquitinyl-[acceptor protein]-L-lysine.</text>
        <dbReference type="EC" id="2.3.2.27"/>
    </reaction>
</comment>
<comment type="pathway">
    <text evidence="6">Protein modification; protein ubiquitination.</text>
</comment>
<comment type="subcellular location">
    <subcellularLocation>
        <location evidence="4">Cytoplasm</location>
    </subcellularLocation>
</comment>
<comment type="induction">
    <text evidence="4">Induced by salt stress in roots (PubMed:27118216). Induced by heat shock, drought stress and abscisic acid (ABA) (PubMed:27118216).</text>
</comment>
<comment type="domain">
    <text evidence="1">The RING-type zinc finger domain mediates binding to an E2 ubiquitin-conjugating enzyme.</text>
</comment>
<comment type="miscellaneous">
    <text evidence="4">Plants over-expressing SIRP1 exhibit enhanced sensitivity to seed germination and root growth inhibition by salt stress.</text>
</comment>
<comment type="sequence caution" evidence="6">
    <conflict type="erroneous gene model prediction">
        <sequence resource="EMBL-CDS" id="BAF17801"/>
    </conflict>
</comment>